<gene>
    <name type="ordered locus">SAS1811</name>
</gene>
<protein>
    <recommendedName>
        <fullName>UPF0421 protein SAS1811</fullName>
    </recommendedName>
</protein>
<keyword id="KW-1003">Cell membrane</keyword>
<keyword id="KW-0472">Membrane</keyword>
<keyword id="KW-0812">Transmembrane</keyword>
<keyword id="KW-1133">Transmembrane helix</keyword>
<reference key="1">
    <citation type="journal article" date="2004" name="Proc. Natl. Acad. Sci. U.S.A.">
        <title>Complete genomes of two clinical Staphylococcus aureus strains: evidence for the rapid evolution of virulence and drug resistance.</title>
        <authorList>
            <person name="Holden M.T.G."/>
            <person name="Feil E.J."/>
            <person name="Lindsay J.A."/>
            <person name="Peacock S.J."/>
            <person name="Day N.P.J."/>
            <person name="Enright M.C."/>
            <person name="Foster T.J."/>
            <person name="Moore C.E."/>
            <person name="Hurst L."/>
            <person name="Atkin R."/>
            <person name="Barron A."/>
            <person name="Bason N."/>
            <person name="Bentley S.D."/>
            <person name="Chillingworth C."/>
            <person name="Chillingworth T."/>
            <person name="Churcher C."/>
            <person name="Clark L."/>
            <person name="Corton C."/>
            <person name="Cronin A."/>
            <person name="Doggett J."/>
            <person name="Dowd L."/>
            <person name="Feltwell T."/>
            <person name="Hance Z."/>
            <person name="Harris B."/>
            <person name="Hauser H."/>
            <person name="Holroyd S."/>
            <person name="Jagels K."/>
            <person name="James K.D."/>
            <person name="Lennard N."/>
            <person name="Line A."/>
            <person name="Mayes R."/>
            <person name="Moule S."/>
            <person name="Mungall K."/>
            <person name="Ormond D."/>
            <person name="Quail M.A."/>
            <person name="Rabbinowitsch E."/>
            <person name="Rutherford K.M."/>
            <person name="Sanders M."/>
            <person name="Sharp S."/>
            <person name="Simmonds M."/>
            <person name="Stevens K."/>
            <person name="Whitehead S."/>
            <person name="Barrell B.G."/>
            <person name="Spratt B.G."/>
            <person name="Parkhill J."/>
        </authorList>
    </citation>
    <scope>NUCLEOTIDE SEQUENCE [LARGE SCALE GENOMIC DNA]</scope>
    <source>
        <strain>MSSA476</strain>
    </source>
</reference>
<proteinExistence type="inferred from homology"/>
<feature type="chain" id="PRO_0000283020" description="UPF0421 protein SAS1811">
    <location>
        <begin position="1"/>
        <end position="328"/>
    </location>
</feature>
<feature type="transmembrane region" description="Helical" evidence="1">
    <location>
        <begin position="19"/>
        <end position="39"/>
    </location>
</feature>
<feature type="transmembrane region" description="Helical" evidence="1">
    <location>
        <begin position="61"/>
        <end position="81"/>
    </location>
</feature>
<feature type="transmembrane region" description="Helical" evidence="1">
    <location>
        <begin position="108"/>
        <end position="128"/>
    </location>
</feature>
<feature type="transmembrane region" description="Helical" evidence="1">
    <location>
        <begin position="132"/>
        <end position="152"/>
    </location>
</feature>
<comment type="subcellular location">
    <subcellularLocation>
        <location evidence="2">Cell membrane</location>
        <topology evidence="2">Multi-pass membrane protein</topology>
    </subcellularLocation>
</comment>
<comment type="similarity">
    <text evidence="2">Belongs to the UPF0421 family.</text>
</comment>
<accession>Q6G845</accession>
<sequence length="328" mass="37436">MNDQWYKHLIGARTIKTGIAIFLTAVFCMALDLTPIYAILTAVVTIEPTAKASLIKGYRRLPATVIGAGFAVLFTYLFGDQSPFTYALSATFTILFCTKLKLQVGTNVAVLTSLAMIPGIHDAYIFNFLSRTLTAIIGLVTSGLINFMVFPPKYYGQVEEKLSKTDALMYKLFYNRCQELILSRLQSDKSEKAYKNIFNLNNQVETLISYQRDELSYHKKKECDWKLLNQLTKRAYTNRLFITHLSNIIYLPKNTRVNFSGDEKMALLKISSSIKDIFYDGSFKREDDSVETLRSTIKALEISGENQIKSHILYEVLMIYRLLDSRYA</sequence>
<name>Y1811_STAAS</name>
<organism>
    <name type="scientific">Staphylococcus aureus (strain MSSA476)</name>
    <dbReference type="NCBI Taxonomy" id="282459"/>
    <lineage>
        <taxon>Bacteria</taxon>
        <taxon>Bacillati</taxon>
        <taxon>Bacillota</taxon>
        <taxon>Bacilli</taxon>
        <taxon>Bacillales</taxon>
        <taxon>Staphylococcaceae</taxon>
        <taxon>Staphylococcus</taxon>
    </lineage>
</organism>
<evidence type="ECO:0000255" key="1"/>
<evidence type="ECO:0000305" key="2"/>
<dbReference type="EMBL" id="BX571857">
    <property type="protein sequence ID" value="CAG43616.1"/>
    <property type="molecule type" value="Genomic_DNA"/>
</dbReference>
<dbReference type="RefSeq" id="WP_000999713.1">
    <property type="nucleotide sequence ID" value="NC_002953.3"/>
</dbReference>
<dbReference type="SMR" id="Q6G845"/>
<dbReference type="KEGG" id="sas:SAS1811"/>
<dbReference type="HOGENOM" id="CLU_067028_0_0_9"/>
<dbReference type="GO" id="GO:0005886">
    <property type="term" value="C:plasma membrane"/>
    <property type="evidence" value="ECO:0007669"/>
    <property type="project" value="UniProtKB-SubCell"/>
</dbReference>
<dbReference type="InterPro" id="IPR010343">
    <property type="entry name" value="ArAE_1"/>
</dbReference>
<dbReference type="PANTHER" id="PTHR31086">
    <property type="entry name" value="ALUMINUM-ACTIVATED MALATE TRANSPORTER 10"/>
    <property type="match status" value="1"/>
</dbReference>
<dbReference type="Pfam" id="PF06081">
    <property type="entry name" value="ArAE_1"/>
    <property type="match status" value="1"/>
</dbReference>